<evidence type="ECO:0000255" key="1">
    <source>
        <dbReference type="HAMAP-Rule" id="MF_00260"/>
    </source>
</evidence>
<dbReference type="EC" id="2.5.1.61" evidence="1"/>
<dbReference type="EMBL" id="CP000753">
    <property type="protein sequence ID" value="ABS10099.1"/>
    <property type="molecule type" value="Genomic_DNA"/>
</dbReference>
<dbReference type="RefSeq" id="WP_011848051.1">
    <property type="nucleotide sequence ID" value="NC_009665.1"/>
</dbReference>
<dbReference type="SMR" id="A6WTG0"/>
<dbReference type="KEGG" id="sbm:Shew185_3978"/>
<dbReference type="HOGENOM" id="CLU_019704_0_2_6"/>
<dbReference type="UniPathway" id="UPA00251">
    <property type="reaction ID" value="UER00319"/>
</dbReference>
<dbReference type="GO" id="GO:0005737">
    <property type="term" value="C:cytoplasm"/>
    <property type="evidence" value="ECO:0007669"/>
    <property type="project" value="TreeGrafter"/>
</dbReference>
<dbReference type="GO" id="GO:0004418">
    <property type="term" value="F:hydroxymethylbilane synthase activity"/>
    <property type="evidence" value="ECO:0007669"/>
    <property type="project" value="UniProtKB-UniRule"/>
</dbReference>
<dbReference type="GO" id="GO:0006782">
    <property type="term" value="P:protoporphyrinogen IX biosynthetic process"/>
    <property type="evidence" value="ECO:0007669"/>
    <property type="project" value="UniProtKB-UniRule"/>
</dbReference>
<dbReference type="CDD" id="cd13646">
    <property type="entry name" value="PBP2_EcHMBS_like"/>
    <property type="match status" value="1"/>
</dbReference>
<dbReference type="FunFam" id="3.30.160.40:FF:000002">
    <property type="entry name" value="Porphobilinogen deaminase"/>
    <property type="match status" value="1"/>
</dbReference>
<dbReference type="FunFam" id="3.40.190.10:FF:000004">
    <property type="entry name" value="Porphobilinogen deaminase"/>
    <property type="match status" value="1"/>
</dbReference>
<dbReference type="FunFam" id="3.40.190.10:FF:000005">
    <property type="entry name" value="Porphobilinogen deaminase"/>
    <property type="match status" value="1"/>
</dbReference>
<dbReference type="Gene3D" id="3.40.190.10">
    <property type="entry name" value="Periplasmic binding protein-like II"/>
    <property type="match status" value="2"/>
</dbReference>
<dbReference type="Gene3D" id="3.30.160.40">
    <property type="entry name" value="Porphobilinogen deaminase, C-terminal domain"/>
    <property type="match status" value="1"/>
</dbReference>
<dbReference type="HAMAP" id="MF_00260">
    <property type="entry name" value="Porphobil_deam"/>
    <property type="match status" value="1"/>
</dbReference>
<dbReference type="InterPro" id="IPR000860">
    <property type="entry name" value="HemC"/>
</dbReference>
<dbReference type="InterPro" id="IPR022419">
    <property type="entry name" value="Porphobilin_deaminase_cofac_BS"/>
</dbReference>
<dbReference type="InterPro" id="IPR022417">
    <property type="entry name" value="Porphobilin_deaminase_N"/>
</dbReference>
<dbReference type="InterPro" id="IPR022418">
    <property type="entry name" value="Porphobilinogen_deaminase_C"/>
</dbReference>
<dbReference type="InterPro" id="IPR036803">
    <property type="entry name" value="Porphobilinogen_deaminase_C_sf"/>
</dbReference>
<dbReference type="NCBIfam" id="TIGR00212">
    <property type="entry name" value="hemC"/>
    <property type="match status" value="1"/>
</dbReference>
<dbReference type="PANTHER" id="PTHR11557">
    <property type="entry name" value="PORPHOBILINOGEN DEAMINASE"/>
    <property type="match status" value="1"/>
</dbReference>
<dbReference type="PANTHER" id="PTHR11557:SF0">
    <property type="entry name" value="PORPHOBILINOGEN DEAMINASE"/>
    <property type="match status" value="1"/>
</dbReference>
<dbReference type="Pfam" id="PF01379">
    <property type="entry name" value="Porphobil_deam"/>
    <property type="match status" value="1"/>
</dbReference>
<dbReference type="Pfam" id="PF03900">
    <property type="entry name" value="Porphobil_deamC"/>
    <property type="match status" value="1"/>
</dbReference>
<dbReference type="PIRSF" id="PIRSF001438">
    <property type="entry name" value="4pyrrol_synth_OHMeBilane_synth"/>
    <property type="match status" value="1"/>
</dbReference>
<dbReference type="PRINTS" id="PR00151">
    <property type="entry name" value="PORPHBDMNASE"/>
</dbReference>
<dbReference type="SUPFAM" id="SSF53850">
    <property type="entry name" value="Periplasmic binding protein-like II"/>
    <property type="match status" value="1"/>
</dbReference>
<dbReference type="SUPFAM" id="SSF54782">
    <property type="entry name" value="Porphobilinogen deaminase (hydroxymethylbilane synthase), C-terminal domain"/>
    <property type="match status" value="1"/>
</dbReference>
<dbReference type="PROSITE" id="PS00533">
    <property type="entry name" value="PORPHOBILINOGEN_DEAM"/>
    <property type="match status" value="1"/>
</dbReference>
<feature type="chain" id="PRO_1000047766" description="Porphobilinogen deaminase">
    <location>
        <begin position="1"/>
        <end position="310"/>
    </location>
</feature>
<feature type="modified residue" description="S-(dipyrrolylmethanemethyl)cysteine" evidence="1">
    <location>
        <position position="242"/>
    </location>
</feature>
<sequence length="310" mass="33461">MSENRIRIATRKSPLAMWQAEFVKAELERIHPGIVVELLPMSTKGDVILDTPLAKVGGKGLFVKELEVAMLDDLADIAVHSMKDVPVDFPEGLGLEVICEREDPRDAFVSNLYKSISELPLGATVGTSSLRRQCQIRASRPDLIIKDLRGNVGTRLAKLDNGEYDAIILAAAGLIRLKLSERIASFISAEESLPANGQGAVGIECRINDERVKALLAPLEHLETRYRVLAERAMNTRLEGGCQVPIGAFAEIDGDEMTLRGLVGNPDGSEIIEGVITGPKTEATQLGVALAEELLSKGAKTILDAVYAKA</sequence>
<comment type="function">
    <text evidence="1">Tetrapolymerization of the monopyrrole PBG into the hydroxymethylbilane pre-uroporphyrinogen in several discrete steps.</text>
</comment>
<comment type="catalytic activity">
    <reaction evidence="1">
        <text>4 porphobilinogen + H2O = hydroxymethylbilane + 4 NH4(+)</text>
        <dbReference type="Rhea" id="RHEA:13185"/>
        <dbReference type="ChEBI" id="CHEBI:15377"/>
        <dbReference type="ChEBI" id="CHEBI:28938"/>
        <dbReference type="ChEBI" id="CHEBI:57845"/>
        <dbReference type="ChEBI" id="CHEBI:58126"/>
        <dbReference type="EC" id="2.5.1.61"/>
    </reaction>
</comment>
<comment type="cofactor">
    <cofactor evidence="1">
        <name>dipyrromethane</name>
        <dbReference type="ChEBI" id="CHEBI:60342"/>
    </cofactor>
    <text evidence="1">Binds 1 dipyrromethane group covalently.</text>
</comment>
<comment type="pathway">
    <text evidence="1">Porphyrin-containing compound metabolism; protoporphyrin-IX biosynthesis; coproporphyrinogen-III from 5-aminolevulinate: step 2/4.</text>
</comment>
<comment type="subunit">
    <text evidence="1">Monomer.</text>
</comment>
<comment type="miscellaneous">
    <text evidence="1">The porphobilinogen subunits are added to the dipyrromethane group.</text>
</comment>
<comment type="similarity">
    <text evidence="1">Belongs to the HMBS family.</text>
</comment>
<organism>
    <name type="scientific">Shewanella baltica (strain OS185)</name>
    <dbReference type="NCBI Taxonomy" id="402882"/>
    <lineage>
        <taxon>Bacteria</taxon>
        <taxon>Pseudomonadati</taxon>
        <taxon>Pseudomonadota</taxon>
        <taxon>Gammaproteobacteria</taxon>
        <taxon>Alteromonadales</taxon>
        <taxon>Shewanellaceae</taxon>
        <taxon>Shewanella</taxon>
    </lineage>
</organism>
<name>HEM3_SHEB8</name>
<accession>A6WTG0</accession>
<protein>
    <recommendedName>
        <fullName evidence="1">Porphobilinogen deaminase</fullName>
        <shortName evidence="1">PBG</shortName>
        <ecNumber evidence="1">2.5.1.61</ecNumber>
    </recommendedName>
    <alternativeName>
        <fullName evidence="1">Hydroxymethylbilane synthase</fullName>
        <shortName evidence="1">HMBS</shortName>
    </alternativeName>
    <alternativeName>
        <fullName evidence="1">Pre-uroporphyrinogen synthase</fullName>
    </alternativeName>
</protein>
<reference key="1">
    <citation type="submission" date="2007-07" db="EMBL/GenBank/DDBJ databases">
        <title>Complete sequence of chromosome of Shewanella baltica OS185.</title>
        <authorList>
            <consortium name="US DOE Joint Genome Institute"/>
            <person name="Copeland A."/>
            <person name="Lucas S."/>
            <person name="Lapidus A."/>
            <person name="Barry K."/>
            <person name="Glavina del Rio T."/>
            <person name="Dalin E."/>
            <person name="Tice H."/>
            <person name="Pitluck S."/>
            <person name="Sims D."/>
            <person name="Brettin T."/>
            <person name="Bruce D."/>
            <person name="Detter J.C."/>
            <person name="Han C."/>
            <person name="Schmutz J."/>
            <person name="Larimer F."/>
            <person name="Land M."/>
            <person name="Hauser L."/>
            <person name="Kyrpides N."/>
            <person name="Mikhailova N."/>
            <person name="Brettar I."/>
            <person name="Rodrigues J."/>
            <person name="Konstantinidis K."/>
            <person name="Tiedje J."/>
            <person name="Richardson P."/>
        </authorList>
    </citation>
    <scope>NUCLEOTIDE SEQUENCE [LARGE SCALE GENOMIC DNA]</scope>
    <source>
        <strain>OS185</strain>
    </source>
</reference>
<keyword id="KW-0627">Porphyrin biosynthesis</keyword>
<keyword id="KW-0808">Transferase</keyword>
<gene>
    <name evidence="1" type="primary">hemC</name>
    <name type="ordered locus">Shew185_3978</name>
</gene>
<proteinExistence type="inferred from homology"/>